<proteinExistence type="inferred from homology"/>
<accession>B7HPX8</accession>
<feature type="chain" id="PRO_1000190452" description="33 kDa chaperonin">
    <location>
        <begin position="1"/>
        <end position="291"/>
    </location>
</feature>
<feature type="disulfide bond" description="Redox-active" evidence="1">
    <location>
        <begin position="237"/>
        <end position="239"/>
    </location>
</feature>
<feature type="disulfide bond" description="Redox-active" evidence="1">
    <location>
        <begin position="270"/>
        <end position="273"/>
    </location>
</feature>
<comment type="function">
    <text evidence="1">Redox regulated molecular chaperone. Protects both thermally unfolding and oxidatively damaged proteins from irreversible aggregation. Plays an important role in the bacterial defense system toward oxidative stress.</text>
</comment>
<comment type="subcellular location">
    <subcellularLocation>
        <location evidence="1">Cytoplasm</location>
    </subcellularLocation>
</comment>
<comment type="PTM">
    <text evidence="1">Under oxidizing conditions two disulfide bonds are formed involving the reactive cysteines. Under reducing conditions zinc is bound to the reactive cysteines and the protein is inactive.</text>
</comment>
<comment type="similarity">
    <text evidence="1">Belongs to the HSP33 family.</text>
</comment>
<protein>
    <recommendedName>
        <fullName evidence="1">33 kDa chaperonin</fullName>
    </recommendedName>
    <alternativeName>
        <fullName evidence="1">Heat shock protein 33 homolog</fullName>
        <shortName evidence="1">HSP33</shortName>
    </alternativeName>
</protein>
<keyword id="KW-0143">Chaperone</keyword>
<keyword id="KW-0963">Cytoplasm</keyword>
<keyword id="KW-1015">Disulfide bond</keyword>
<keyword id="KW-0676">Redox-active center</keyword>
<keyword id="KW-0862">Zinc</keyword>
<organism>
    <name type="scientific">Bacillus cereus (strain AH187)</name>
    <dbReference type="NCBI Taxonomy" id="405534"/>
    <lineage>
        <taxon>Bacteria</taxon>
        <taxon>Bacillati</taxon>
        <taxon>Bacillota</taxon>
        <taxon>Bacilli</taxon>
        <taxon>Bacillales</taxon>
        <taxon>Bacillaceae</taxon>
        <taxon>Bacillus</taxon>
        <taxon>Bacillus cereus group</taxon>
    </lineage>
</organism>
<sequence length="291" mass="32058">MKDYLVKALAFDGEVRAYSVRTTNTVSEAQRRHDTWRTASAALGRSLTAGTMMGAMLKGDQKLTIKVEGNGPIGPILVDAHANGDVRGYVTNPHVDFEGTEQGKLRVYQAVGTEGFVTVIKDIGMREPFIGQSPIVSGELGEDFTYYFAVSEQTPSSVGVGVLVNGDDSILAAGGFILQIMPGAQEETISFIEERLQKIPPVSTLIEQGLSPEELLYAVLGEDKVKVLETMDVQFNCTCSRERIESVLISLGKTELEQVREEEEETEVHCHFCNERYKFSKEDITNLIENL</sequence>
<gene>
    <name evidence="1" type="primary">hslO</name>
    <name type="ordered locus">BCAH187_A0078</name>
</gene>
<dbReference type="EMBL" id="CP001177">
    <property type="protein sequence ID" value="ACJ78823.1"/>
    <property type="molecule type" value="Genomic_DNA"/>
</dbReference>
<dbReference type="SMR" id="B7HPX8"/>
<dbReference type="KEGG" id="bcr:BCAH187_A0078"/>
<dbReference type="HOGENOM" id="CLU_054493_1_0_9"/>
<dbReference type="Proteomes" id="UP000002214">
    <property type="component" value="Chromosome"/>
</dbReference>
<dbReference type="GO" id="GO:0005737">
    <property type="term" value="C:cytoplasm"/>
    <property type="evidence" value="ECO:0007669"/>
    <property type="project" value="UniProtKB-SubCell"/>
</dbReference>
<dbReference type="GO" id="GO:0044183">
    <property type="term" value="F:protein folding chaperone"/>
    <property type="evidence" value="ECO:0007669"/>
    <property type="project" value="TreeGrafter"/>
</dbReference>
<dbReference type="GO" id="GO:0051082">
    <property type="term" value="F:unfolded protein binding"/>
    <property type="evidence" value="ECO:0007669"/>
    <property type="project" value="UniProtKB-UniRule"/>
</dbReference>
<dbReference type="GO" id="GO:0042026">
    <property type="term" value="P:protein refolding"/>
    <property type="evidence" value="ECO:0007669"/>
    <property type="project" value="TreeGrafter"/>
</dbReference>
<dbReference type="CDD" id="cd00498">
    <property type="entry name" value="Hsp33"/>
    <property type="match status" value="1"/>
</dbReference>
<dbReference type="Gene3D" id="3.55.30.10">
    <property type="entry name" value="Hsp33 domain"/>
    <property type="match status" value="1"/>
</dbReference>
<dbReference type="Gene3D" id="3.90.1280.10">
    <property type="entry name" value="HSP33 redox switch-like"/>
    <property type="match status" value="1"/>
</dbReference>
<dbReference type="HAMAP" id="MF_00117">
    <property type="entry name" value="HslO"/>
    <property type="match status" value="1"/>
</dbReference>
<dbReference type="InterPro" id="IPR000397">
    <property type="entry name" value="Heat_shock_Hsp33"/>
</dbReference>
<dbReference type="InterPro" id="IPR016154">
    <property type="entry name" value="Heat_shock_Hsp33_C"/>
</dbReference>
<dbReference type="InterPro" id="IPR016153">
    <property type="entry name" value="Heat_shock_Hsp33_N"/>
</dbReference>
<dbReference type="NCBIfam" id="NF001033">
    <property type="entry name" value="PRK00114.1"/>
    <property type="match status" value="1"/>
</dbReference>
<dbReference type="PANTHER" id="PTHR30111">
    <property type="entry name" value="33 KDA CHAPERONIN"/>
    <property type="match status" value="1"/>
</dbReference>
<dbReference type="PANTHER" id="PTHR30111:SF1">
    <property type="entry name" value="33 KDA CHAPERONIN"/>
    <property type="match status" value="1"/>
</dbReference>
<dbReference type="Pfam" id="PF01430">
    <property type="entry name" value="HSP33"/>
    <property type="match status" value="1"/>
</dbReference>
<dbReference type="PIRSF" id="PIRSF005261">
    <property type="entry name" value="Heat_shock_Hsp33"/>
    <property type="match status" value="1"/>
</dbReference>
<dbReference type="SUPFAM" id="SSF64397">
    <property type="entry name" value="Hsp33 domain"/>
    <property type="match status" value="1"/>
</dbReference>
<dbReference type="SUPFAM" id="SSF118352">
    <property type="entry name" value="HSP33 redox switch-like"/>
    <property type="match status" value="1"/>
</dbReference>
<reference key="1">
    <citation type="submission" date="2008-10" db="EMBL/GenBank/DDBJ databases">
        <title>Genome sequence of Bacillus cereus AH187.</title>
        <authorList>
            <person name="Dodson R.J."/>
            <person name="Durkin A.S."/>
            <person name="Rosovitz M.J."/>
            <person name="Rasko D.A."/>
            <person name="Kolsto A.B."/>
            <person name="Okstad O.A."/>
            <person name="Ravel J."/>
            <person name="Sutton G."/>
        </authorList>
    </citation>
    <scope>NUCLEOTIDE SEQUENCE [LARGE SCALE GENOMIC DNA]</scope>
    <source>
        <strain>AH187</strain>
    </source>
</reference>
<name>HSLO_BACC7</name>
<evidence type="ECO:0000255" key="1">
    <source>
        <dbReference type="HAMAP-Rule" id="MF_00117"/>
    </source>
</evidence>